<organismHost>
    <name type="scientific">Homo sapiens</name>
    <name type="common">Human</name>
    <dbReference type="NCBI Taxonomy" id="9606"/>
</organismHost>
<feature type="signal peptide" evidence="3">
    <location>
        <begin position="1"/>
        <end position="23"/>
    </location>
</feature>
<feature type="chain" id="PRO_0000039252" description="Fusion glycoprotein F0">
    <location>
        <begin position="24"/>
        <end position="550"/>
    </location>
</feature>
<feature type="chain" id="PRO_0000039253" description="Fusion glycoprotein F2">
    <location>
        <begin position="24"/>
        <end position="112"/>
    </location>
</feature>
<feature type="chain" id="PRO_0000039254" description="Fusion glycoprotein F1">
    <location>
        <begin position="113"/>
        <end position="550"/>
    </location>
</feature>
<feature type="topological domain" description="Extracellular" evidence="1">
    <location>
        <begin position="24"/>
        <end position="487"/>
    </location>
</feature>
<feature type="transmembrane region" description="Helical" evidence="3">
    <location>
        <begin position="488"/>
        <end position="518"/>
    </location>
</feature>
<feature type="topological domain" description="Cytoplasmic" evidence="1">
    <location>
        <begin position="519"/>
        <end position="550"/>
    </location>
</feature>
<feature type="region of interest" description="HRC" evidence="2">
    <location>
        <begin position="69"/>
        <end position="95"/>
    </location>
</feature>
<feature type="region of interest" description="Fusion peptide" evidence="2">
    <location>
        <begin position="113"/>
        <end position="138"/>
    </location>
</feature>
<feature type="region of interest" description="HRA" evidence="2">
    <location>
        <begin position="139"/>
        <end position="215"/>
    </location>
</feature>
<feature type="region of interest" description="Interaction with hemagglutinin" evidence="2">
    <location>
        <begin position="367"/>
        <end position="444"/>
    </location>
</feature>
<feature type="region of interest" description="HRB" evidence="2">
    <location>
        <begin position="445"/>
        <end position="494"/>
    </location>
</feature>
<feature type="coiled-coil region" evidence="3">
    <location>
        <begin position="138"/>
        <end position="166"/>
    </location>
</feature>
<feature type="coiled-coil region" evidence="3">
    <location>
        <begin position="462"/>
        <end position="487"/>
    </location>
</feature>
<feature type="site" description="Cleavage; by host" evidence="1">
    <location>
        <begin position="112"/>
        <end position="113"/>
    </location>
</feature>
<feature type="glycosylation site" description="N-linked (GlcNAc...) asparagine; by host" evidence="3">
    <location>
        <position position="29"/>
    </location>
</feature>
<feature type="glycosylation site" description="N-linked (GlcNAc...) asparagine; by host" evidence="3">
    <location>
        <position position="61"/>
    </location>
</feature>
<feature type="glycosylation site" description="N-linked (GlcNAc...) asparagine; by host" evidence="3">
    <location>
        <position position="67"/>
    </location>
</feature>
<feature type="disulfide bond" description="Interchain (with C-195)" evidence="2">
    <location>
        <position position="68"/>
    </location>
</feature>
<feature type="disulfide bond" description="Interchain (with C-68)" evidence="2">
    <location>
        <position position="195"/>
    </location>
</feature>
<feature type="disulfide bond" evidence="2">
    <location>
        <begin position="334"/>
        <end position="343"/>
    </location>
</feature>
<feature type="disulfide bond" evidence="2">
    <location>
        <begin position="358"/>
        <end position="366"/>
    </location>
</feature>
<feature type="disulfide bond" evidence="2">
    <location>
        <begin position="390"/>
        <end position="395"/>
    </location>
</feature>
<feature type="disulfide bond" evidence="2">
    <location>
        <begin position="397"/>
        <end position="420"/>
    </location>
</feature>
<evidence type="ECO:0000250" key="1"/>
<evidence type="ECO:0000250" key="2">
    <source>
        <dbReference type="UniProtKB" id="Q786F3"/>
    </source>
</evidence>
<evidence type="ECO:0000255" key="3"/>
<evidence type="ECO:0000305" key="4"/>
<protein>
    <recommendedName>
        <fullName>Fusion glycoprotein F0</fullName>
    </recommendedName>
    <component>
        <recommendedName>
            <fullName>Fusion glycoprotein F2</fullName>
        </recommendedName>
    </component>
    <component>
        <recommendedName>
            <fullName>Fusion glycoprotein F1</fullName>
        </recommendedName>
    </component>
</protein>
<accession>P35973</accession>
<gene>
    <name type="primary">F</name>
</gene>
<organism>
    <name type="scientific">Measles virus (strain Edmonston-AIK-C vaccine)</name>
    <name type="common">MeV</name>
    <name type="synonym">Subacute sclerose panencephalitis virus</name>
    <dbReference type="NCBI Taxonomy" id="36408"/>
    <lineage>
        <taxon>Viruses</taxon>
        <taxon>Riboviria</taxon>
        <taxon>Orthornavirae</taxon>
        <taxon>Negarnaviricota</taxon>
        <taxon>Haploviricotina</taxon>
        <taxon>Monjiviricetes</taxon>
        <taxon>Mononegavirales</taxon>
        <taxon>Paramyxoviridae</taxon>
        <taxon>Orthoparamyxovirinae</taxon>
        <taxon>Morbillivirus</taxon>
        <taxon>Morbillivirus hominis</taxon>
        <taxon>Measles morbillivirus</taxon>
    </lineage>
</organism>
<keyword id="KW-0165">Cleavage on pair of basic residues</keyword>
<keyword id="KW-0175">Coiled coil</keyword>
<keyword id="KW-1015">Disulfide bond</keyword>
<keyword id="KW-1169">Fusion of virus membrane with host cell membrane</keyword>
<keyword id="KW-1168">Fusion of virus membrane with host membrane</keyword>
<keyword id="KW-0325">Glycoprotein</keyword>
<keyword id="KW-1032">Host cell membrane</keyword>
<keyword id="KW-1043">Host membrane</keyword>
<keyword id="KW-0472">Membrane</keyword>
<keyword id="KW-0732">Signal</keyword>
<keyword id="KW-0812">Transmembrane</keyword>
<keyword id="KW-1133">Transmembrane helix</keyword>
<keyword id="KW-0261">Viral envelope protein</keyword>
<keyword id="KW-1162">Viral penetration into host cytoplasm</keyword>
<keyword id="KW-0946">Virion</keyword>
<keyword id="KW-1160">Virus entry into host cell</keyword>
<dbReference type="EMBL" id="S58435">
    <property type="protein sequence ID" value="AAB26145.1"/>
    <property type="molecule type" value="Genomic_RNA"/>
</dbReference>
<dbReference type="PIR" id="E48556">
    <property type="entry name" value="E48556"/>
</dbReference>
<dbReference type="SMR" id="P35973"/>
<dbReference type="GlyCosmos" id="P35973">
    <property type="glycosylation" value="3 sites, No reported glycans"/>
</dbReference>
<dbReference type="Proteomes" id="UP000007775">
    <property type="component" value="Genome"/>
</dbReference>
<dbReference type="GO" id="GO:0020002">
    <property type="term" value="C:host cell plasma membrane"/>
    <property type="evidence" value="ECO:0007669"/>
    <property type="project" value="UniProtKB-SubCell"/>
</dbReference>
<dbReference type="GO" id="GO:0016020">
    <property type="term" value="C:membrane"/>
    <property type="evidence" value="ECO:0007669"/>
    <property type="project" value="UniProtKB-KW"/>
</dbReference>
<dbReference type="GO" id="GO:0019031">
    <property type="term" value="C:viral envelope"/>
    <property type="evidence" value="ECO:0007669"/>
    <property type="project" value="UniProtKB-KW"/>
</dbReference>
<dbReference type="GO" id="GO:0055036">
    <property type="term" value="C:virion membrane"/>
    <property type="evidence" value="ECO:0007669"/>
    <property type="project" value="UniProtKB-SubCell"/>
</dbReference>
<dbReference type="GO" id="GO:0019064">
    <property type="term" value="P:fusion of virus membrane with host plasma membrane"/>
    <property type="evidence" value="ECO:0007669"/>
    <property type="project" value="UniProtKB-KW"/>
</dbReference>
<dbReference type="GO" id="GO:0046718">
    <property type="term" value="P:symbiont entry into host cell"/>
    <property type="evidence" value="ECO:0007669"/>
    <property type="project" value="UniProtKB-KW"/>
</dbReference>
<dbReference type="Gene3D" id="1.10.287.2480">
    <property type="match status" value="1"/>
</dbReference>
<dbReference type="Gene3D" id="6.10.10.110">
    <property type="match status" value="1"/>
</dbReference>
<dbReference type="Gene3D" id="2.60.40.1690">
    <property type="entry name" value="Head and neck region of the ectodomain of NDV fusion glycoprotein"/>
    <property type="match status" value="1"/>
</dbReference>
<dbReference type="Gene3D" id="2.40.490.10">
    <property type="entry name" value="Newcastle disease virus like domain"/>
    <property type="match status" value="1"/>
</dbReference>
<dbReference type="InterPro" id="IPR000776">
    <property type="entry name" value="Fusion_F0_Paramyxovir"/>
</dbReference>
<dbReference type="Pfam" id="PF00523">
    <property type="entry name" value="Fusion_gly"/>
    <property type="match status" value="1"/>
</dbReference>
<dbReference type="SUPFAM" id="SSF69922">
    <property type="entry name" value="Head and neck region of the ectodomain of NDV fusion glycoprotein"/>
    <property type="match status" value="1"/>
</dbReference>
<dbReference type="SUPFAM" id="SSF58069">
    <property type="entry name" value="Virus ectodomain"/>
    <property type="match status" value="1"/>
</dbReference>
<comment type="function">
    <text evidence="1 2">Class I viral fusion protein. Under the current model, the protein has at least 3 conformational states: pre-fusion native state, pre-hairpin intermediate state, and post-fusion hairpin state. During viral and plasma cell membrane fusion, the heptad repeat (HR) regions assume a trimer-of-hairpins structure, positioning the fusion peptide in close proximity to the C-terminal region of the ectodomain. The formation of this structure appears to drive apposition and subsequent fusion of viral and plasma cell membranes. Directs fusion of viral and cellular membranes leading to delivery of the nucleocapsid into the cytoplasm. This fusion is pH independent and occurs directly at the outer cell membrane. During viral entry or virus-mediated fusion between infected cells and neighboring susceptible cells, the head domain of the H protein initially binds to its receptor and then the stalk region of the H protein transmits the fusion-triggering signal to the F protein (By similarity). Upon HN binding to its cellular receptor, the hydrophobic fusion peptide is unmasked and interacts with the cellular membrane, inducing the fusion between cell and virion membranes. Later in infection, F proteins expressed at the plasma membrane of infected cells could mediate fusion with adjacent cells to form syncytia, a cytopathic effect that could lead to tissue necrosis (By similarity).</text>
</comment>
<comment type="function">
    <text evidence="2">Some hyperfusogenic isolates can induce membrane fusion in SLAM- and nectin-4-negative cells and are linked to fatal subacute sclerosing panencephalitis (SSPE) or measles inclusion body encephalitis (MIBE). The neuropathogenicity is closely associated with enhanced propagation mediated by cell-to-cell fusion in the brain, which is principally regulated by hyperfusogenic mutations of the viral F protein. Cell-to-cell transmission of the virus also occurs with hyperfusogenic isolates.</text>
</comment>
<comment type="subunit">
    <text evidence="2">Homotrimer of disulfide-linked F1-F2.</text>
</comment>
<comment type="subcellular location">
    <subcellularLocation>
        <location evidence="1">Virion membrane</location>
        <topology evidence="1">Single-pass type I membrane protein</topology>
    </subcellularLocation>
    <subcellularLocation>
        <location evidence="1">Host cell membrane</location>
        <topology evidence="1">Single-pass membrane protein</topology>
    </subcellularLocation>
</comment>
<comment type="domain">
    <text evidence="2">Contains 3 heptad repreat regions, HRA, HRB and HRC.</text>
</comment>
<comment type="PTM">
    <text evidence="2">The inactive precursor F0 is glycosylated and proteolytically cleaved into F1 and F2 to be functionally active. The cleavage is mediated by host furin during the transport and maturation of the polypeptide.</text>
</comment>
<comment type="similarity">
    <text evidence="4">Belongs to the paramyxoviruses fusion glycoprotein family.</text>
</comment>
<reference key="1">
    <citation type="journal article" date="1993" name="Virus Genes">
        <title>Molecular cloning and complete nucleotide sequence of genomic RNA of the AIK-C strain of attenuated measles virus.</title>
        <authorList>
            <person name="Mori T."/>
            <person name="Sasaki K."/>
            <person name="Hashimoto H."/>
            <person name="Makino S."/>
        </authorList>
    </citation>
    <scope>NUCLEOTIDE SEQUENCE [GENOMIC RNA]</scope>
</reference>
<name>FUS_MEASA</name>
<sequence>MGLKVNVSAIFMAVLLTLQTPTGQIHWGNLSKIGVVGIGSASYKVMTRSSHQSLVIKLMPNITLLNNCTRVEIAEYRRLLRTVLEPIRDALNAMTQNIRPVQSVASSRRHKRFAGVVLAGAALGVATAAQITAGIALHQSMLNSQAIDNLRASLETTNQAIEAIRQAGQEMILAVQGVQDYINNELIPSMNQLSCDLIGQKLGLKLLRYYTEILSLFGPSLRDPISAEISIQALSYALGGDINKVLEKLGYSGGDLLGILESRGIKARITHVDTESYLIVLSIAYPTLSEIKGVIVHRLEGVSYNIGSQEWYTTVPKYVATQGYLISNFDESSCTFMPEGTVCSQNALYPMSPLLQECLRGSTKSCARTLVSGSFGNRFILSQGNLIANCASILCKCYTTGTIINQDPDKILTYIAADHCPVVEVNGVTIQVGSRRYPDAVYLHRIDLGPPILLERLDVGTNLGNAIAKLEDAKELLESSDQILRSMKGLSSTCIVYILIAVCLGGLIGIPALICCCRGRCNKKGEQVGMSRPGLKPDLTGTSKSYVRSL</sequence>
<proteinExistence type="inferred from homology"/>